<dbReference type="EMBL" id="X70499">
    <property type="protein sequence ID" value="CAA49907.1"/>
    <property type="molecule type" value="Genomic_DNA"/>
</dbReference>
<dbReference type="PIR" id="S34778">
    <property type="entry name" value="S34778"/>
</dbReference>
<dbReference type="SMR" id="Q05500"/>
<feature type="chain" id="PRO_0000066314" description="Uncharacterized protein in mutS 5'region">
    <location>
        <begin position="1" status="less than"/>
        <end position="100"/>
    </location>
</feature>
<feature type="non-terminal residue">
    <location>
        <position position="1"/>
    </location>
</feature>
<name>YMTS_CLOTT</name>
<accession>Q05500</accession>
<protein>
    <recommendedName>
        <fullName>Uncharacterized protein in mutS 5'region</fullName>
    </recommendedName>
    <alternativeName>
        <fullName>ORF1</fullName>
    </alternativeName>
</protein>
<proteinExistence type="predicted"/>
<reference key="1">
    <citation type="journal article" date="1993" name="FEBS Lett.">
        <title>Cloning and sequencing of glutamate mutase component E from Clostridium tetanomorphum. Organization of the mut genes.</title>
        <authorList>
            <person name="Holloway D.E."/>
            <person name="Marsh E.N.G."/>
        </authorList>
    </citation>
    <scope>NUCLEOTIDE SEQUENCE [GENOMIC DNA]</scope>
    <source>
        <strain>ATCC 15920 / DSM 528 / NCIMB 11547 / H1</strain>
    </source>
</reference>
<organism>
    <name type="scientific">Clostridium tetanomorphum</name>
    <dbReference type="NCBI Taxonomy" id="1553"/>
    <lineage>
        <taxon>Bacteria</taxon>
        <taxon>Bacillati</taxon>
        <taxon>Bacillota</taxon>
        <taxon>Clostridia</taxon>
        <taxon>Eubacteriales</taxon>
        <taxon>Clostridiaceae</taxon>
        <taxon>Clostridium</taxon>
    </lineage>
</organism>
<sequence length="100" mass="11534">PMETRFSFICISEEFKFKVRDALESAGLGNIIITYTNSSDREELMEVIENSDVIITSPGRYKELYEINNGRRQIINFLYSLDDGSVKALKSKLLEIKYSK</sequence>